<keyword id="KW-0024">Alternative initiation</keyword>
<keyword id="KW-0150">Chloroplast</keyword>
<keyword id="KW-0238">DNA-binding</keyword>
<keyword id="KW-0255">Endonuclease</keyword>
<keyword id="KW-0378">Hydrolase</keyword>
<keyword id="KW-0404">Intron homing</keyword>
<keyword id="KW-0479">Metal-binding</keyword>
<keyword id="KW-0496">Mitochondrion</keyword>
<keyword id="KW-0540">Nuclease</keyword>
<keyword id="KW-0934">Plastid</keyword>
<keyword id="KW-1185">Reference proteome</keyword>
<keyword id="KW-0809">Transit peptide</keyword>
<keyword id="KW-0862">Zinc</keyword>
<keyword id="KW-0863">Zinc-finger</keyword>
<feature type="transit peptide" description="Mitochondrion" evidence="1">
    <location>
        <begin position="1"/>
        <end position="16"/>
    </location>
</feature>
<feature type="chain" id="PRO_0000440122" description="Nuclear intron maturase 4, mitochondrial">
    <location>
        <begin position="17"/>
        <end position="798"/>
    </location>
</feature>
<feature type="zinc finger region" description="THAP-type" evidence="2">
    <location>
        <begin position="729"/>
        <end position="778"/>
    </location>
</feature>
<feature type="region of interest" description="Intron maturase type-2" evidence="1">
    <location>
        <begin position="578"/>
        <end position="665"/>
    </location>
</feature>
<feature type="splice variant" id="VSP_058948" description="In isoform 2.">
    <location>
        <begin position="46"/>
        <end position="90"/>
    </location>
</feature>
<gene>
    <name evidence="6" type="primary">NMAT4</name>
    <name evidence="5" type="synonym">NMAT2B</name>
    <name evidence="9" type="ordered locus">At1g74350</name>
    <name evidence="10" type="ORF">F1M20.3</name>
</gene>
<sequence>MFRKRNLVLDLLRRCYIETLIPRGLWSRTISTFPKSALLATDNAEMASKETGMFSLAGELASLVEESSSHVDDDSKPRSRMELKRSLELRLKKRVKEQCINGKFSDLLKKVIARPETLRDAYDCIRLNSNVSITERNGSVAFDSIAEELSSGVFDVASNTFSIVARDKTKEVLVLPSVALKVVQEAIRIVLEVVFSPHFSKISHSCRSGRGRASALKYINNNISRSDWCFTLSLNKKLDVSVFENLLSVMEEKVEDSSLSILLRSMFEARVLNLEFGGFPKGHGLPQEGVLSRVLMNIYLDRFDHEFYRISMRHEALGLDSKTDEDSPGSKLRSWFRRQAGEQGLKSTTEQDVALRVYCCRFMDEIYFSVSGPKKVASDIRSEAIGFLRNSLHLDITDETDPSPCEATSGLRVLGTLVRKNVRESPTVKAVHKLKEKVRLFALQKEEAWTLGTVRIGKKWLGHGLKKVKESEIKGLADSNSTLSQISCHRKAGMETDHWYKILLRIWMEDVLRTSADRSEEFVLSKHVVEPTVPQELRDAFYKFQNAAAAYVSSETANLEALLPCPQSHDRPVFFGDVVAPTNAIGRRLYRYGLITAKGYARSNSMLILLDTAQIIDWYSGLVRRWVIWYEGCSNFDEIKALIDNQIRMSCIRTLAAKYRIHENEIEKRLDLELSTIPSAEDIEQEIQHEKLDSPAFDRDEHLTYGLSNSGLCLLSLARLVSESRPCNCFVIGCSMAAPAVYTLHAMERQKFPGWKTGFSVCIPSSLNGRRIGLCKQHLKDLYIGQISLQAVDFGAWR</sequence>
<accession>Q9CA78</accession>
<organism>
    <name type="scientific">Arabidopsis thaliana</name>
    <name type="common">Mouse-ear cress</name>
    <dbReference type="NCBI Taxonomy" id="3702"/>
    <lineage>
        <taxon>Eukaryota</taxon>
        <taxon>Viridiplantae</taxon>
        <taxon>Streptophyta</taxon>
        <taxon>Embryophyta</taxon>
        <taxon>Tracheophyta</taxon>
        <taxon>Spermatophyta</taxon>
        <taxon>Magnoliopsida</taxon>
        <taxon>eudicotyledons</taxon>
        <taxon>Gunneridae</taxon>
        <taxon>Pentapetalae</taxon>
        <taxon>rosids</taxon>
        <taxon>malvids</taxon>
        <taxon>Brassicales</taxon>
        <taxon>Brassicaceae</taxon>
        <taxon>Camelineae</taxon>
        <taxon>Arabidopsis</taxon>
    </lineage>
</organism>
<comment type="function">
    <text evidence="4">Nuclear-encoded maturase required for splicing of group-II introns in mitochondria. Involved in NAD1 pre-mRNA processing and maturation of introns 1, 3 and 4. Necessary for mitochondrial biogenesis during early developmental stages. Essential for respiratory holocomplex I biogenesis in mitochondria.</text>
</comment>
<comment type="subcellular location">
    <molecule>Isoform 1</molecule>
    <subcellularLocation>
        <location evidence="3 4">Mitochondrion</location>
    </subcellularLocation>
</comment>
<comment type="subcellular location">
    <molecule>Isoform 2</molecule>
    <subcellularLocation>
        <location evidence="3 4">Plastid</location>
        <location evidence="3 4">Chloroplast</location>
    </subcellularLocation>
</comment>
<comment type="alternative products">
    <event type="alternative initiation"/>
    <isoform>
        <id>Q9CA78-1</id>
        <name>1</name>
        <name evidence="6">long</name>
        <name evidence="7">nMAT4L</name>
        <sequence type="displayed"/>
    </isoform>
    <isoform>
        <id>Q9CA78-2</id>
        <name>2</name>
        <name evidence="6">short</name>
        <name evidence="7">nMAT4S</name>
        <sequence type="described" ref="VSP_058948"/>
    </isoform>
</comment>
<comment type="disruption phenotype">
    <text evidence="4">Altered mitochondrial morphology. Impaired seed germination (e.g. many dark and wrinkled seeds in siliques), seedling establishment and development (e.g. abnormal primary root elongation and vegetative growth). Defects in the processing and maturation of various mitochondrial NAD1 introns. Modified respiration phenotypes associated with complex I defects. Seed-specific deficiency in the regulation of carbohydrate metabolism. Small plants requiring sucrose-supplemented medium to survive.</text>
</comment>
<comment type="similarity">
    <text evidence="8">Belongs to the plant nuclear intron maturase (nMat) family.</text>
</comment>
<name>NMAT4_ARATH</name>
<evidence type="ECO:0000255" key="1"/>
<evidence type="ECO:0000255" key="2">
    <source>
        <dbReference type="PROSITE-ProRule" id="PRU00309"/>
    </source>
</evidence>
<evidence type="ECO:0000269" key="3">
    <source>
    </source>
</evidence>
<evidence type="ECO:0000269" key="4">
    <source>
    </source>
</evidence>
<evidence type="ECO:0000303" key="5">
    <source>
    </source>
</evidence>
<evidence type="ECO:0000303" key="6">
    <source>
    </source>
</evidence>
<evidence type="ECO:0000303" key="7">
    <source>
    </source>
</evidence>
<evidence type="ECO:0000305" key="8"/>
<evidence type="ECO:0000312" key="9">
    <source>
        <dbReference type="Araport" id="AT1G74350"/>
    </source>
</evidence>
<evidence type="ECO:0000312" key="10">
    <source>
        <dbReference type="EMBL" id="AAG52355.1"/>
    </source>
</evidence>
<protein>
    <recommendedName>
        <fullName evidence="6">Nuclear intron maturase 4, mitochondrial</fullName>
        <shortName evidence="6">AtnMat4</shortName>
        <ecNumber>3.1.-.-</ecNumber>
    </recommendedName>
    <alternativeName>
        <fullName evidence="5">Nuclear intron maturase 2 b</fullName>
        <shortName evidence="5">AtnMat2b</shortName>
    </alternativeName>
</protein>
<dbReference type="EC" id="3.1.-.-"/>
<dbReference type="EMBL" id="AC011765">
    <property type="protein sequence ID" value="AAG52355.1"/>
    <property type="molecule type" value="Genomic_DNA"/>
</dbReference>
<dbReference type="EMBL" id="CP002684">
    <property type="protein sequence ID" value="AEE35581.1"/>
    <property type="molecule type" value="Genomic_DNA"/>
</dbReference>
<dbReference type="PIR" id="B96772">
    <property type="entry name" value="B96772"/>
</dbReference>
<dbReference type="RefSeq" id="NP_177575.1">
    <property type="nucleotide sequence ID" value="NM_106095.2"/>
</dbReference>
<dbReference type="FunCoup" id="Q9CA78">
    <property type="interactions" value="2"/>
</dbReference>
<dbReference type="STRING" id="3702.Q9CA78"/>
<dbReference type="PaxDb" id="3702-AT1G74350.1"/>
<dbReference type="PeptideAtlas" id="Q9CA78"/>
<dbReference type="ProteomicsDB" id="251066">
    <molecule id="Q9CA78-1"/>
</dbReference>
<dbReference type="GeneID" id="843776"/>
<dbReference type="KEGG" id="ath:AT1G74350"/>
<dbReference type="Araport" id="AT1G74350"/>
<dbReference type="TAIR" id="AT1G74350">
    <property type="gene designation" value="NMAT4"/>
</dbReference>
<dbReference type="eggNOG" id="KOG1075">
    <property type="taxonomic scope" value="Eukaryota"/>
</dbReference>
<dbReference type="HOGENOM" id="CLU_013547_0_0_1"/>
<dbReference type="InParanoid" id="Q9CA78"/>
<dbReference type="OrthoDB" id="1866033at2759"/>
<dbReference type="PhylomeDB" id="Q9CA78"/>
<dbReference type="PRO" id="PR:Q9CA78"/>
<dbReference type="Proteomes" id="UP000006548">
    <property type="component" value="Chromosome 1"/>
</dbReference>
<dbReference type="ExpressionAtlas" id="Q9CA78">
    <property type="expression patterns" value="baseline and differential"/>
</dbReference>
<dbReference type="GO" id="GO:0009507">
    <property type="term" value="C:chloroplast"/>
    <property type="evidence" value="ECO:0000314"/>
    <property type="project" value="UniProtKB"/>
</dbReference>
<dbReference type="GO" id="GO:0005739">
    <property type="term" value="C:mitochondrion"/>
    <property type="evidence" value="ECO:0000314"/>
    <property type="project" value="UniProtKB"/>
</dbReference>
<dbReference type="GO" id="GO:0003677">
    <property type="term" value="F:DNA binding"/>
    <property type="evidence" value="ECO:0007669"/>
    <property type="project" value="UniProtKB-KW"/>
</dbReference>
<dbReference type="GO" id="GO:0004519">
    <property type="term" value="F:endonuclease activity"/>
    <property type="evidence" value="ECO:0007669"/>
    <property type="project" value="UniProtKB-KW"/>
</dbReference>
<dbReference type="GO" id="GO:0003964">
    <property type="term" value="F:RNA-directed DNA polymerase activity"/>
    <property type="evidence" value="ECO:0000318"/>
    <property type="project" value="GO_Central"/>
</dbReference>
<dbReference type="GO" id="GO:0008270">
    <property type="term" value="F:zinc ion binding"/>
    <property type="evidence" value="ECO:0007669"/>
    <property type="project" value="UniProtKB-KW"/>
</dbReference>
<dbReference type="GO" id="GO:0000373">
    <property type="term" value="P:Group II intron splicing"/>
    <property type="evidence" value="ECO:0000315"/>
    <property type="project" value="UniProtKB"/>
</dbReference>
<dbReference type="GO" id="GO:0006315">
    <property type="term" value="P:homing of group II introns"/>
    <property type="evidence" value="ECO:0000318"/>
    <property type="project" value="GO_Central"/>
</dbReference>
<dbReference type="GO" id="GO:0090615">
    <property type="term" value="P:mitochondrial mRNA processing"/>
    <property type="evidence" value="ECO:0000315"/>
    <property type="project" value="UniProtKB"/>
</dbReference>
<dbReference type="GO" id="GO:1900864">
    <property type="term" value="P:mitochondrial RNA modification"/>
    <property type="evidence" value="ECO:0000315"/>
    <property type="project" value="TAIR"/>
</dbReference>
<dbReference type="GO" id="GO:0007005">
    <property type="term" value="P:mitochondrion organization"/>
    <property type="evidence" value="ECO:0000315"/>
    <property type="project" value="UniProtKB"/>
</dbReference>
<dbReference type="GO" id="GO:0032885">
    <property type="term" value="P:regulation of polysaccharide biosynthetic process"/>
    <property type="evidence" value="ECO:0000315"/>
    <property type="project" value="UniProtKB"/>
</dbReference>
<dbReference type="GO" id="GO:0009845">
    <property type="term" value="P:seed germination"/>
    <property type="evidence" value="ECO:0000315"/>
    <property type="project" value="TAIR"/>
</dbReference>
<dbReference type="GO" id="GO:0090351">
    <property type="term" value="P:seedling development"/>
    <property type="evidence" value="ECO:0000315"/>
    <property type="project" value="TAIR"/>
</dbReference>
<dbReference type="CDD" id="cd01651">
    <property type="entry name" value="RT_G2_intron"/>
    <property type="match status" value="1"/>
</dbReference>
<dbReference type="InterPro" id="IPR024937">
    <property type="entry name" value="Domain_X"/>
</dbReference>
<dbReference type="PANTHER" id="PTHR33642">
    <property type="entry name" value="COX1/OXI3 INTRON 1 PROTEIN-RELATED"/>
    <property type="match status" value="1"/>
</dbReference>
<dbReference type="PANTHER" id="PTHR33642:SF3">
    <property type="entry name" value="NUCLEAR INTRON MATURASE 4, MITOCHONDRIAL"/>
    <property type="match status" value="1"/>
</dbReference>
<dbReference type="Pfam" id="PF01348">
    <property type="entry name" value="Intron_maturas2"/>
    <property type="match status" value="1"/>
</dbReference>
<proteinExistence type="inferred from homology"/>
<reference key="1">
    <citation type="journal article" date="2000" name="Nature">
        <title>Sequence and analysis of chromosome 1 of the plant Arabidopsis thaliana.</title>
        <authorList>
            <person name="Theologis A."/>
            <person name="Ecker J.R."/>
            <person name="Palm C.J."/>
            <person name="Federspiel N.A."/>
            <person name="Kaul S."/>
            <person name="White O."/>
            <person name="Alonso J."/>
            <person name="Altafi H."/>
            <person name="Araujo R."/>
            <person name="Bowman C.L."/>
            <person name="Brooks S.Y."/>
            <person name="Buehler E."/>
            <person name="Chan A."/>
            <person name="Chao Q."/>
            <person name="Chen H."/>
            <person name="Cheuk R.F."/>
            <person name="Chin C.W."/>
            <person name="Chung M.K."/>
            <person name="Conn L."/>
            <person name="Conway A.B."/>
            <person name="Conway A.R."/>
            <person name="Creasy T.H."/>
            <person name="Dewar K."/>
            <person name="Dunn P."/>
            <person name="Etgu P."/>
            <person name="Feldblyum T.V."/>
            <person name="Feng J.-D."/>
            <person name="Fong B."/>
            <person name="Fujii C.Y."/>
            <person name="Gill J.E."/>
            <person name="Goldsmith A.D."/>
            <person name="Haas B."/>
            <person name="Hansen N.F."/>
            <person name="Hughes B."/>
            <person name="Huizar L."/>
            <person name="Hunter J.L."/>
            <person name="Jenkins J."/>
            <person name="Johnson-Hopson C."/>
            <person name="Khan S."/>
            <person name="Khaykin E."/>
            <person name="Kim C.J."/>
            <person name="Koo H.L."/>
            <person name="Kremenetskaia I."/>
            <person name="Kurtz D.B."/>
            <person name="Kwan A."/>
            <person name="Lam B."/>
            <person name="Langin-Hooper S."/>
            <person name="Lee A."/>
            <person name="Lee J.M."/>
            <person name="Lenz C.A."/>
            <person name="Li J.H."/>
            <person name="Li Y.-P."/>
            <person name="Lin X."/>
            <person name="Liu S.X."/>
            <person name="Liu Z.A."/>
            <person name="Luros J.S."/>
            <person name="Maiti R."/>
            <person name="Marziali A."/>
            <person name="Militscher J."/>
            <person name="Miranda M."/>
            <person name="Nguyen M."/>
            <person name="Nierman W.C."/>
            <person name="Osborne B.I."/>
            <person name="Pai G."/>
            <person name="Peterson J."/>
            <person name="Pham P.K."/>
            <person name="Rizzo M."/>
            <person name="Rooney T."/>
            <person name="Rowley D."/>
            <person name="Sakano H."/>
            <person name="Salzberg S.L."/>
            <person name="Schwartz J.R."/>
            <person name="Shinn P."/>
            <person name="Southwick A.M."/>
            <person name="Sun H."/>
            <person name="Tallon L.J."/>
            <person name="Tambunga G."/>
            <person name="Toriumi M.J."/>
            <person name="Town C.D."/>
            <person name="Utterback T."/>
            <person name="Van Aken S."/>
            <person name="Vaysberg M."/>
            <person name="Vysotskaia V.S."/>
            <person name="Walker M."/>
            <person name="Wu D."/>
            <person name="Yu G."/>
            <person name="Fraser C.M."/>
            <person name="Venter J.C."/>
            <person name="Davis R.W."/>
        </authorList>
    </citation>
    <scope>NUCLEOTIDE SEQUENCE [LARGE SCALE GENOMIC DNA]</scope>
    <source>
        <strain>cv. Columbia</strain>
    </source>
</reference>
<reference key="2">
    <citation type="journal article" date="2017" name="Plant J.">
        <title>Araport11: a complete reannotation of the Arabidopsis thaliana reference genome.</title>
        <authorList>
            <person name="Cheng C.Y."/>
            <person name="Krishnakumar V."/>
            <person name="Chan A.P."/>
            <person name="Thibaud-Nissen F."/>
            <person name="Schobel S."/>
            <person name="Town C.D."/>
        </authorList>
    </citation>
    <scope>GENOME REANNOTATION</scope>
    <source>
        <strain>cv. Columbia</strain>
    </source>
</reference>
<reference key="3">
    <citation type="journal article" date="2003" name="Nucleic Acids Res.">
        <title>Putative proteins related to group II intron reverse transcriptase/maturases are encoded by nuclear genes in higher plants.</title>
        <authorList>
            <person name="Mohr G."/>
            <person name="Lambowitz A.M."/>
        </authorList>
    </citation>
    <scope>GENE FAMILY</scope>
</reference>
<reference key="4">
    <citation type="journal article" date="2009" name="RNA">
        <title>AtnMat2, a nuclear-encoded maturase required for splicing of group-II introns in Arabidopsis mitochondria.</title>
        <authorList>
            <person name="Keren I."/>
            <person name="Bezawork-Geleta A."/>
            <person name="Kolton M."/>
            <person name="Maayan I."/>
            <person name="Belausov E."/>
            <person name="Levy M."/>
            <person name="Mett A."/>
            <person name="Gidoni D."/>
            <person name="Shaya F."/>
            <person name="Ostersetzer-Biran O."/>
        </authorList>
    </citation>
    <scope>SUBCELLULAR LOCATION</scope>
    <scope>GENE FAMILY</scope>
    <scope>NOMENCLATURE</scope>
</reference>
<reference key="5">
    <citation type="journal article" date="2014" name="Front. Plant Sci.">
        <title>Group II intron splicing factors in plant mitochondria.</title>
        <authorList>
            <person name="Brown G.G."/>
            <person name="Colas des Francs-Small C."/>
            <person name="Ostersetzer-Biran O."/>
        </authorList>
    </citation>
    <scope>REVIEW ON SPLICING FACTORS</scope>
    <source>
        <strain>cv. Columbia</strain>
    </source>
</reference>
<reference key="6">
    <citation type="journal article" date="2014" name="Plant J.">
        <title>nMAT4, a maturase factor required for nad1 pre-mRNA processing and maturation, is essential for holocomplex I biogenesis in Arabidopsis mitochondria.</title>
        <authorList>
            <person name="Cohen S."/>
            <person name="Zmudjak M."/>
            <person name="Colas des Francs-Small C."/>
            <person name="Malik S."/>
            <person name="Shaya F."/>
            <person name="Keren I."/>
            <person name="Belausov E."/>
            <person name="Many Y."/>
            <person name="Brown G.G."/>
            <person name="Small I."/>
            <person name="Ostersetzer-Biran O."/>
        </authorList>
    </citation>
    <scope>FUNCTION</scope>
    <scope>DISRUPTION PHENOTYPE</scope>
    <scope>ALTERNATIVE SPLICING</scope>
    <scope>SUBCELLULAR LOCATION</scope>
    <source>
        <strain>cv. Columbia</strain>
    </source>
</reference>